<protein>
    <recommendedName>
        <fullName>CBP80/20-dependent translation initiation factor</fullName>
    </recommendedName>
</protein>
<sequence>MENSSAASASSEAGSSRSQEIEELERFIDSYVLEYQVQGLLTDKTEGDGESQRTQSHISQWTADCREQLDGSCSFSRGRAPPQQNGNKDNSLDMLGTDIWAANTFDSFSGATWDLQPEKLDFTQFHRKVRHTPKQPLPHIDREGCGKGKLEDGDGISLNDIEKVLPTWQGYHPMPHEAEIAHTKKLFRRRRNDRRRQQRPPGGNKPQQHGDHQPGSAKHNRDHQKSYQGGSGPHPSGRPTHHGYSQNRRWHHGNMKHPPGDKGEAGSHRNAKETVTVENPKLEDGPGDTGHSGLEPPCSPDTLTPAASERPTPQLPGGPEAEIKHKDTVLPERLRERPKITLLQSSKDRLRRRLKEKDRDEVAVETSSPQPSKMDRLMEILNIMRNNSSDVDAKLTSFMEEAQNSTNSEEMLGEIVRTIYQKAVSDRSFAFTAAKLCDKMALFMVEGTKFRSLLLNMLQKDFTVREELQQQDVERWLGFITFLCEVFGTMRSSTGEPFRVLVCPIYTCLRELLQSQDVKEDAVLCCSMELQSTGRLLEEQLPEMMTELLASARDKMLCPSESMLTRSLLLEVIELHANSWNPLTPPITQYYNRTIQKLTA</sequence>
<proteinExistence type="evidence at protein level"/>
<organism>
    <name type="scientific">Mus musculus</name>
    <name type="common">Mouse</name>
    <dbReference type="NCBI Taxonomy" id="10090"/>
    <lineage>
        <taxon>Eukaryota</taxon>
        <taxon>Metazoa</taxon>
        <taxon>Chordata</taxon>
        <taxon>Craniata</taxon>
        <taxon>Vertebrata</taxon>
        <taxon>Euteleostomi</taxon>
        <taxon>Mammalia</taxon>
        <taxon>Eutheria</taxon>
        <taxon>Euarchontoglires</taxon>
        <taxon>Glires</taxon>
        <taxon>Rodentia</taxon>
        <taxon>Myomorpha</taxon>
        <taxon>Muroidea</taxon>
        <taxon>Muridae</taxon>
        <taxon>Murinae</taxon>
        <taxon>Mus</taxon>
        <taxon>Mus</taxon>
    </lineage>
</organism>
<feature type="chain" id="PRO_0000050755" description="CBP80/20-dependent translation initiation factor">
    <location>
        <begin position="1"/>
        <end position="600"/>
    </location>
</feature>
<feature type="domain" description="MIF4G">
    <location>
        <begin position="378"/>
        <end position="579"/>
    </location>
</feature>
<feature type="region of interest" description="Interaction with NCBP1/CBP80" evidence="1">
    <location>
        <begin position="1"/>
        <end position="305"/>
    </location>
</feature>
<feature type="region of interest" description="Disordered" evidence="3">
    <location>
        <begin position="1"/>
        <end position="20"/>
    </location>
</feature>
<feature type="region of interest" description="Disordered" evidence="3">
    <location>
        <begin position="43"/>
        <end position="62"/>
    </location>
</feature>
<feature type="region of interest" description="Disordered" evidence="3">
    <location>
        <begin position="134"/>
        <end position="154"/>
    </location>
</feature>
<feature type="region of interest" description="Disordered" evidence="3">
    <location>
        <begin position="175"/>
        <end position="370"/>
    </location>
</feature>
<feature type="compositionally biased region" description="Low complexity" evidence="3">
    <location>
        <begin position="1"/>
        <end position="18"/>
    </location>
</feature>
<feature type="compositionally biased region" description="Polar residues" evidence="3">
    <location>
        <begin position="52"/>
        <end position="62"/>
    </location>
</feature>
<feature type="compositionally biased region" description="Basic and acidic residues" evidence="3">
    <location>
        <begin position="139"/>
        <end position="152"/>
    </location>
</feature>
<feature type="compositionally biased region" description="Basic residues" evidence="3">
    <location>
        <begin position="183"/>
        <end position="198"/>
    </location>
</feature>
<feature type="compositionally biased region" description="Basic and acidic residues" evidence="3">
    <location>
        <begin position="258"/>
        <end position="272"/>
    </location>
</feature>
<feature type="compositionally biased region" description="Basic and acidic residues" evidence="3">
    <location>
        <begin position="321"/>
        <end position="339"/>
    </location>
</feature>
<feature type="modified residue" description="N-acetylmethionine" evidence="2">
    <location>
        <position position="1"/>
    </location>
</feature>
<feature type="modified residue" description="Phosphoserine" evidence="7">
    <location>
        <position position="18"/>
    </location>
</feature>
<feature type="modified residue" description="Phosphothreonine" evidence="2">
    <location>
        <position position="289"/>
    </location>
</feature>
<feature type="modified residue" description="Phosphoserine" evidence="2">
    <location>
        <position position="299"/>
    </location>
</feature>
<feature type="splice variant" id="VSP_038120" description="In isoform 2." evidence="5">
    <original>R</original>
    <variation>RDIPNPTETSAPLRCVLCVPHVPQ</variation>
    <location>
        <position position="359"/>
    </location>
</feature>
<feature type="sequence conflict" description="In Ref. 2; BAD32227." evidence="6" ref="2">
    <original>I</original>
    <variation>S</variation>
    <location>
        <position position="383"/>
    </location>
</feature>
<reference key="1">
    <citation type="journal article" date="2004" name="Genome Res.">
        <title>The status, quality, and expansion of the NIH full-length cDNA project: the Mammalian Gene Collection (MGC).</title>
        <authorList>
            <consortium name="The MGC Project Team"/>
        </authorList>
    </citation>
    <scope>NUCLEOTIDE SEQUENCE [LARGE SCALE MRNA] (ISOFORM 2)</scope>
    <source>
        <strain>C57BL/6J</strain>
        <tissue>Brain</tissue>
    </source>
</reference>
<reference key="2">
    <citation type="journal article" date="2004" name="DNA Res.">
        <title>Prediction of the coding sequences of mouse homologues of KIAA gene: IV. The complete nucleotide sequences of 500 mouse KIAA-homologous cDNAs identified by screening of terminal sequences of cDNA clones randomly sampled from size-fractionated libraries.</title>
        <authorList>
            <person name="Okazaki N."/>
            <person name="Kikuno R."/>
            <person name="Ohara R."/>
            <person name="Inamoto S."/>
            <person name="Koseki H."/>
            <person name="Hiraoka S."/>
            <person name="Saga Y."/>
            <person name="Seino S."/>
            <person name="Nishimura M."/>
            <person name="Kaisho T."/>
            <person name="Hoshino K."/>
            <person name="Kitamura H."/>
            <person name="Nagase T."/>
            <person name="Ohara O."/>
            <person name="Koga H."/>
        </authorList>
    </citation>
    <scope>NUCLEOTIDE SEQUENCE [LARGE SCALE MRNA] OF 334-600 (ISOFORM 1)</scope>
    <source>
        <tissue>Pancreatic islet</tissue>
    </source>
</reference>
<reference key="3">
    <citation type="journal article" date="2007" name="Proc. Natl. Acad. Sci. U.S.A.">
        <title>Large-scale phosphorylation analysis of mouse liver.</title>
        <authorList>
            <person name="Villen J."/>
            <person name="Beausoleil S.A."/>
            <person name="Gerber S.A."/>
            <person name="Gygi S.P."/>
        </authorList>
    </citation>
    <scope>PHOSPHORYLATION [LARGE SCALE ANALYSIS] AT SER-18</scope>
    <scope>IDENTIFICATION BY MASS SPECTROMETRY [LARGE SCALE ANALYSIS]</scope>
    <source>
        <tissue>Liver</tissue>
    </source>
</reference>
<reference key="4">
    <citation type="journal article" date="2009" name="Genes Dev.">
        <title>A new MIF4G domain-containing protein, CTIF, directs nuclear cap-binding protein CBP80/20-dependent translation.</title>
        <authorList>
            <person name="Kim K.M."/>
            <person name="Cho H."/>
            <person name="Choi K."/>
            <person name="Kim J."/>
            <person name="Kim B.-W."/>
            <person name="Ko Y.-G."/>
            <person name="Jang S.K."/>
            <person name="Kim Y.K."/>
        </authorList>
    </citation>
    <scope>TISSUE SPECIFICITY</scope>
</reference>
<name>CTIF_MOUSE</name>
<dbReference type="EMBL" id="BC058104">
    <property type="protein sequence ID" value="AAH58104.1"/>
    <property type="molecule type" value="mRNA"/>
</dbReference>
<dbReference type="EMBL" id="AK172949">
    <property type="protein sequence ID" value="BAD32227.1"/>
    <property type="molecule type" value="mRNA"/>
</dbReference>
<dbReference type="CCDS" id="CCDS37861.1">
    <molecule id="Q6PEE2-2"/>
</dbReference>
<dbReference type="RefSeq" id="NP_958742.2">
    <property type="nucleotide sequence ID" value="NM_201354.2"/>
</dbReference>
<dbReference type="SMR" id="Q6PEE2"/>
<dbReference type="BioGRID" id="234598">
    <property type="interactions" value="3"/>
</dbReference>
<dbReference type="FunCoup" id="Q6PEE2">
    <property type="interactions" value="439"/>
</dbReference>
<dbReference type="STRING" id="10090.ENSMUSP00000129974"/>
<dbReference type="GlyGen" id="Q6PEE2">
    <property type="glycosylation" value="1 site, 1 N-linked glycan (1 site)"/>
</dbReference>
<dbReference type="iPTMnet" id="Q6PEE2"/>
<dbReference type="PhosphoSitePlus" id="Q6PEE2"/>
<dbReference type="jPOST" id="Q6PEE2"/>
<dbReference type="PaxDb" id="10090-ENSMUSP00000129974"/>
<dbReference type="PeptideAtlas" id="Q6PEE2"/>
<dbReference type="ProteomicsDB" id="285218">
    <molecule id="Q6PEE2-1"/>
</dbReference>
<dbReference type="ProteomicsDB" id="285219">
    <molecule id="Q6PEE2-2"/>
</dbReference>
<dbReference type="Pumba" id="Q6PEE2"/>
<dbReference type="DNASU" id="269037"/>
<dbReference type="GeneID" id="269037"/>
<dbReference type="KEGG" id="mmu:269037"/>
<dbReference type="UCSC" id="uc008fqf.2">
    <molecule id="Q6PEE2-1"/>
    <property type="organism name" value="mouse"/>
</dbReference>
<dbReference type="AGR" id="MGI:2685518"/>
<dbReference type="CTD" id="9811"/>
<dbReference type="MGI" id="MGI:2685518">
    <property type="gene designation" value="Ctif"/>
</dbReference>
<dbReference type="eggNOG" id="KOG3942">
    <property type="taxonomic scope" value="Eukaryota"/>
</dbReference>
<dbReference type="InParanoid" id="Q6PEE2"/>
<dbReference type="OrthoDB" id="6484979at2759"/>
<dbReference type="PhylomeDB" id="Q6PEE2"/>
<dbReference type="BioGRID-ORCS" id="269037">
    <property type="hits" value="0 hits in 76 CRISPR screens"/>
</dbReference>
<dbReference type="ChiTaRS" id="Ctif">
    <property type="organism name" value="mouse"/>
</dbReference>
<dbReference type="PRO" id="PR:Q6PEE2"/>
<dbReference type="Proteomes" id="UP000000589">
    <property type="component" value="Unplaced"/>
</dbReference>
<dbReference type="RNAct" id="Q6PEE2">
    <property type="molecule type" value="protein"/>
</dbReference>
<dbReference type="GO" id="GO:0048471">
    <property type="term" value="C:perinuclear region of cytoplasm"/>
    <property type="evidence" value="ECO:0000250"/>
    <property type="project" value="UniProtKB"/>
</dbReference>
<dbReference type="GO" id="GO:0003723">
    <property type="term" value="F:RNA binding"/>
    <property type="evidence" value="ECO:0007669"/>
    <property type="project" value="InterPro"/>
</dbReference>
<dbReference type="GO" id="GO:0000184">
    <property type="term" value="P:nuclear-transcribed mRNA catabolic process, nonsense-mediated decay"/>
    <property type="evidence" value="ECO:0000250"/>
    <property type="project" value="UniProtKB"/>
</dbReference>
<dbReference type="GO" id="GO:0006446">
    <property type="term" value="P:regulation of translational initiation"/>
    <property type="evidence" value="ECO:0000250"/>
    <property type="project" value="UniProtKB"/>
</dbReference>
<dbReference type="FunFam" id="1.25.40.180:FF:000019">
    <property type="entry name" value="CBP80/20-dependent translation initiation factor isoform X2"/>
    <property type="match status" value="1"/>
</dbReference>
<dbReference type="Gene3D" id="1.25.40.180">
    <property type="match status" value="1"/>
</dbReference>
<dbReference type="InterPro" id="IPR016024">
    <property type="entry name" value="ARM-type_fold"/>
</dbReference>
<dbReference type="InterPro" id="IPR003890">
    <property type="entry name" value="MIF4G-like_typ-3"/>
</dbReference>
<dbReference type="InterPro" id="IPR051367">
    <property type="entry name" value="mRNA_TranslReg/HistoneTransl"/>
</dbReference>
<dbReference type="PANTHER" id="PTHR23254:SF16">
    <property type="entry name" value="CBP80_20-DEPENDENT TRANSLATION INITIATION FACTOR"/>
    <property type="match status" value="1"/>
</dbReference>
<dbReference type="PANTHER" id="PTHR23254">
    <property type="entry name" value="EIF4G DOMAIN PROTEIN"/>
    <property type="match status" value="1"/>
</dbReference>
<dbReference type="Pfam" id="PF02854">
    <property type="entry name" value="MIF4G"/>
    <property type="match status" value="1"/>
</dbReference>
<dbReference type="SMART" id="SM00543">
    <property type="entry name" value="MIF4G"/>
    <property type="match status" value="1"/>
</dbReference>
<dbReference type="SUPFAM" id="SSF48371">
    <property type="entry name" value="ARM repeat"/>
    <property type="match status" value="1"/>
</dbReference>
<evidence type="ECO:0000250" key="1"/>
<evidence type="ECO:0000250" key="2">
    <source>
        <dbReference type="UniProtKB" id="O43310"/>
    </source>
</evidence>
<evidence type="ECO:0000256" key="3">
    <source>
        <dbReference type="SAM" id="MobiDB-lite"/>
    </source>
</evidence>
<evidence type="ECO:0000269" key="4">
    <source>
    </source>
</evidence>
<evidence type="ECO:0000303" key="5">
    <source>
    </source>
</evidence>
<evidence type="ECO:0000305" key="6"/>
<evidence type="ECO:0007744" key="7">
    <source>
    </source>
</evidence>
<gene>
    <name type="primary">Ctif</name>
    <name type="synonym">Gm672</name>
    <name type="synonym">Kiaa0427</name>
</gene>
<comment type="function">
    <text evidence="1">Specifically required for the pioneer round of mRNA translation mediated by the cap-binding complex (CBC), that takes place during or right after mRNA export via the nuclear pore complex (NPC). Acts via its interaction with the NCBP1/CBP80 component of the CBC complex and recruits the 40S small subunit of the ribosome via eIF3. In contrast, it is not involved in steady state translation, that takes place when the CBC complex is replaced by cytoplasmic cap-binding protein eIF4E. Also required for nonsense-mediated mRNA decay (NMD), the pioneer round of mRNA translation mediated by the cap-binding complex playing a central role in nonsense-mediated mRNA decay (NMD) (By similarity).</text>
</comment>
<comment type="subunit">
    <text evidence="1">Interacts with NCBP1/CBP80; the interaction is direct. Associates with the eukaryotic translation initiation factor 3 (eIF-3) complex (By similarity).</text>
</comment>
<comment type="subcellular location">
    <subcellularLocation>
        <location evidence="1">Cytoplasm</location>
        <location evidence="1">Perinuclear region</location>
    </subcellularLocation>
</comment>
<comment type="alternative products">
    <event type="alternative splicing"/>
    <isoform>
        <id>Q6PEE2-1</id>
        <name>1</name>
        <sequence type="displayed"/>
    </isoform>
    <isoform>
        <id>Q6PEE2-2</id>
        <name>2</name>
        <sequence type="described" ref="VSP_038120"/>
    </isoform>
</comment>
<comment type="tissue specificity">
    <text evidence="4">Widely expressed.</text>
</comment>
<comment type="similarity">
    <text evidence="6">Belongs to the CTIF family.</text>
</comment>
<keyword id="KW-0007">Acetylation</keyword>
<keyword id="KW-0025">Alternative splicing</keyword>
<keyword id="KW-0963">Cytoplasm</keyword>
<keyword id="KW-0866">Nonsense-mediated mRNA decay</keyword>
<keyword id="KW-0597">Phosphoprotein</keyword>
<keyword id="KW-1185">Reference proteome</keyword>
<keyword id="KW-0810">Translation regulation</keyword>
<accession>Q6PEE2</accession>
<accession>Q6A069</accession>